<gene>
    <name evidence="1" type="primary">leuS</name>
    <name type="ordered locus">RPR_05595</name>
</gene>
<organism>
    <name type="scientific">Rickettsia peacockii (strain Rustic)</name>
    <dbReference type="NCBI Taxonomy" id="562019"/>
    <lineage>
        <taxon>Bacteria</taxon>
        <taxon>Pseudomonadati</taxon>
        <taxon>Pseudomonadota</taxon>
        <taxon>Alphaproteobacteria</taxon>
        <taxon>Rickettsiales</taxon>
        <taxon>Rickettsiaceae</taxon>
        <taxon>Rickettsieae</taxon>
        <taxon>Rickettsia</taxon>
        <taxon>spotted fever group</taxon>
    </lineage>
</organism>
<feature type="chain" id="PRO_1000202228" description="Leucine--tRNA ligase">
    <location>
        <begin position="1"/>
        <end position="835"/>
    </location>
</feature>
<feature type="short sequence motif" description="'HIGH' region">
    <location>
        <begin position="36"/>
        <end position="46"/>
    </location>
</feature>
<feature type="short sequence motif" description="'KMSKS' region">
    <location>
        <begin position="602"/>
        <end position="606"/>
    </location>
</feature>
<feature type="binding site" evidence="1">
    <location>
        <position position="605"/>
    </location>
    <ligand>
        <name>ATP</name>
        <dbReference type="ChEBI" id="CHEBI:30616"/>
    </ligand>
</feature>
<reference key="1">
    <citation type="journal article" date="2009" name="PLoS ONE">
        <title>Genome sequence of the endosymbiont Rickettsia peacockii and comparison with virulent Rickettsia rickettsii: identification of virulence factors.</title>
        <authorList>
            <person name="Felsheim R.F."/>
            <person name="Kurtti T.J."/>
            <person name="Munderloh U.G."/>
        </authorList>
    </citation>
    <scope>NUCLEOTIDE SEQUENCE [LARGE SCALE GENOMIC DNA]</scope>
    <source>
        <strain>Rustic</strain>
    </source>
</reference>
<keyword id="KW-0030">Aminoacyl-tRNA synthetase</keyword>
<keyword id="KW-0067">ATP-binding</keyword>
<keyword id="KW-0963">Cytoplasm</keyword>
<keyword id="KW-0436">Ligase</keyword>
<keyword id="KW-0547">Nucleotide-binding</keyword>
<keyword id="KW-0648">Protein biosynthesis</keyword>
<name>SYL_RICPU</name>
<sequence>MNQIEQKWQYIWQEEKAFEVSNASSKPKYYVLEMLPYPSGKIHVGHVRNYSIGDVIARFMTMQGFNVLHPMGWDAFGLPAENAAIKNNSHPKKWTYSNIKNMKKQLKSMGFSYDWSREINSCDPEYYKHEQKFFLELYERNLAYQKASFVNWDPVDNTVLANEQVVDGRGWRSGAIVAKRYLKQWFLKITDYAEELLNEIQNLKEWPEAVRSMQEKWIGKSIGANFHFKIKDNEETTIEVFSTKPETIFGASFIGIAFNHPIIERLVSKTPEILAFITQCSHITRSSELEKAEKEGVFTGLFVTHPFDSNIVLPVIITNFVLMDYGTGAIFGCPAHDECDHELAVKMNLSIKQVIKADMDVQKTAYTEDGILINSDVLNGLTSNEAKQEVIGEFEKLGIGKRSVNYRLKDWGISRQRFWGCPIPMIHCEICGIVPVPYKDLPVTLPDDVNFDGHGNPLDHHPSWKHVNCPKCDKPAVRETDTFDTFFESSWYFTRYCNSNATEMTDKKACDYWLPVDKYIGGIEHAVMHLLYARFFTKVMNEQNYVSVREPFKGLFTQGMVLHATYKDEHNNWLYPEEVVKKGNEFFHKESNNRVVQGRIEKMSKSKKNLIDLETMQEQYGADAIRLFVLSDSPPEKDLEWSASGIEGCSRFINKLEYMFKAIDSLKDDVNSEVNKELNRLVHFTIKHVAEDIKHFALNRAIARMRELSNAISAEISKDKIDVKIVRHGFNVLVQLLNPFIPHITEEIWQKLGNKERLYNLSFPAFDESMLELDTYIMAVQVNGKLRDTYEFKTSVSEDEIKQVTVSLPKVQKCLEGKEPKKIILVPRKIVNILV</sequence>
<proteinExistence type="inferred from homology"/>
<comment type="catalytic activity">
    <reaction evidence="1">
        <text>tRNA(Leu) + L-leucine + ATP = L-leucyl-tRNA(Leu) + AMP + diphosphate</text>
        <dbReference type="Rhea" id="RHEA:11688"/>
        <dbReference type="Rhea" id="RHEA-COMP:9613"/>
        <dbReference type="Rhea" id="RHEA-COMP:9622"/>
        <dbReference type="ChEBI" id="CHEBI:30616"/>
        <dbReference type="ChEBI" id="CHEBI:33019"/>
        <dbReference type="ChEBI" id="CHEBI:57427"/>
        <dbReference type="ChEBI" id="CHEBI:78442"/>
        <dbReference type="ChEBI" id="CHEBI:78494"/>
        <dbReference type="ChEBI" id="CHEBI:456215"/>
        <dbReference type="EC" id="6.1.1.4"/>
    </reaction>
</comment>
<comment type="subcellular location">
    <subcellularLocation>
        <location evidence="1">Cytoplasm</location>
    </subcellularLocation>
</comment>
<comment type="similarity">
    <text evidence="1">Belongs to the class-I aminoacyl-tRNA synthetase family.</text>
</comment>
<evidence type="ECO:0000255" key="1">
    <source>
        <dbReference type="HAMAP-Rule" id="MF_00049"/>
    </source>
</evidence>
<protein>
    <recommendedName>
        <fullName evidence="1">Leucine--tRNA ligase</fullName>
        <ecNumber evidence="1">6.1.1.4</ecNumber>
    </recommendedName>
    <alternativeName>
        <fullName evidence="1">Leucyl-tRNA synthetase</fullName>
        <shortName evidence="1">LeuRS</shortName>
    </alternativeName>
</protein>
<accession>C4K297</accession>
<dbReference type="EC" id="6.1.1.4" evidence="1"/>
<dbReference type="EMBL" id="CP001227">
    <property type="protein sequence ID" value="ACR47694.1"/>
    <property type="molecule type" value="Genomic_DNA"/>
</dbReference>
<dbReference type="RefSeq" id="WP_012736890.1">
    <property type="nucleotide sequence ID" value="NC_012730.1"/>
</dbReference>
<dbReference type="SMR" id="C4K297"/>
<dbReference type="KEGG" id="rpk:RPR_05595"/>
<dbReference type="HOGENOM" id="CLU_004427_0_0_5"/>
<dbReference type="Proteomes" id="UP000005015">
    <property type="component" value="Chromosome"/>
</dbReference>
<dbReference type="GO" id="GO:0005737">
    <property type="term" value="C:cytoplasm"/>
    <property type="evidence" value="ECO:0007669"/>
    <property type="project" value="UniProtKB-SubCell"/>
</dbReference>
<dbReference type="GO" id="GO:0002161">
    <property type="term" value="F:aminoacyl-tRNA deacylase activity"/>
    <property type="evidence" value="ECO:0007669"/>
    <property type="project" value="InterPro"/>
</dbReference>
<dbReference type="GO" id="GO:0005524">
    <property type="term" value="F:ATP binding"/>
    <property type="evidence" value="ECO:0007669"/>
    <property type="project" value="UniProtKB-UniRule"/>
</dbReference>
<dbReference type="GO" id="GO:0004823">
    <property type="term" value="F:leucine-tRNA ligase activity"/>
    <property type="evidence" value="ECO:0007669"/>
    <property type="project" value="UniProtKB-UniRule"/>
</dbReference>
<dbReference type="GO" id="GO:0006429">
    <property type="term" value="P:leucyl-tRNA aminoacylation"/>
    <property type="evidence" value="ECO:0007669"/>
    <property type="project" value="UniProtKB-UniRule"/>
</dbReference>
<dbReference type="CDD" id="cd07958">
    <property type="entry name" value="Anticodon_Ia_Leu_BEm"/>
    <property type="match status" value="1"/>
</dbReference>
<dbReference type="CDD" id="cd00812">
    <property type="entry name" value="LeuRS_core"/>
    <property type="match status" value="1"/>
</dbReference>
<dbReference type="FunFam" id="1.10.730.10:FF:000081">
    <property type="entry name" value="Leucine--tRNA ligase"/>
    <property type="match status" value="1"/>
</dbReference>
<dbReference type="FunFam" id="3.10.20.590:FF:000001">
    <property type="entry name" value="Leucine--tRNA ligase"/>
    <property type="match status" value="1"/>
</dbReference>
<dbReference type="FunFam" id="3.40.50.620:FF:000003">
    <property type="entry name" value="Leucine--tRNA ligase"/>
    <property type="match status" value="1"/>
</dbReference>
<dbReference type="FunFam" id="3.40.50.620:FF:000051">
    <property type="entry name" value="Leucine--tRNA ligase"/>
    <property type="match status" value="1"/>
</dbReference>
<dbReference type="Gene3D" id="2.20.28.290">
    <property type="match status" value="1"/>
</dbReference>
<dbReference type="Gene3D" id="3.10.20.590">
    <property type="match status" value="1"/>
</dbReference>
<dbReference type="Gene3D" id="3.40.50.620">
    <property type="entry name" value="HUPs"/>
    <property type="match status" value="2"/>
</dbReference>
<dbReference type="Gene3D" id="1.10.730.10">
    <property type="entry name" value="Isoleucyl-tRNA Synthetase, Domain 1"/>
    <property type="match status" value="1"/>
</dbReference>
<dbReference type="HAMAP" id="MF_00049_B">
    <property type="entry name" value="Leu_tRNA_synth_B"/>
    <property type="match status" value="1"/>
</dbReference>
<dbReference type="InterPro" id="IPR001412">
    <property type="entry name" value="aa-tRNA-synth_I_CS"/>
</dbReference>
<dbReference type="InterPro" id="IPR002300">
    <property type="entry name" value="aa-tRNA-synth_Ia"/>
</dbReference>
<dbReference type="InterPro" id="IPR002302">
    <property type="entry name" value="Leu-tRNA-ligase"/>
</dbReference>
<dbReference type="InterPro" id="IPR025709">
    <property type="entry name" value="Leu_tRNA-synth_edit"/>
</dbReference>
<dbReference type="InterPro" id="IPR013155">
    <property type="entry name" value="M/V/L/I-tRNA-synth_anticd-bd"/>
</dbReference>
<dbReference type="InterPro" id="IPR015413">
    <property type="entry name" value="Methionyl/Leucyl_tRNA_Synth"/>
</dbReference>
<dbReference type="InterPro" id="IPR014729">
    <property type="entry name" value="Rossmann-like_a/b/a_fold"/>
</dbReference>
<dbReference type="InterPro" id="IPR009080">
    <property type="entry name" value="tRNAsynth_Ia_anticodon-bd"/>
</dbReference>
<dbReference type="InterPro" id="IPR009008">
    <property type="entry name" value="Val/Leu/Ile-tRNA-synth_edit"/>
</dbReference>
<dbReference type="NCBIfam" id="TIGR00396">
    <property type="entry name" value="leuS_bact"/>
    <property type="match status" value="1"/>
</dbReference>
<dbReference type="PANTHER" id="PTHR43740:SF2">
    <property type="entry name" value="LEUCINE--TRNA LIGASE, MITOCHONDRIAL"/>
    <property type="match status" value="1"/>
</dbReference>
<dbReference type="PANTHER" id="PTHR43740">
    <property type="entry name" value="LEUCYL-TRNA SYNTHETASE"/>
    <property type="match status" value="1"/>
</dbReference>
<dbReference type="Pfam" id="PF08264">
    <property type="entry name" value="Anticodon_1"/>
    <property type="match status" value="1"/>
</dbReference>
<dbReference type="Pfam" id="PF00133">
    <property type="entry name" value="tRNA-synt_1"/>
    <property type="match status" value="2"/>
</dbReference>
<dbReference type="Pfam" id="PF13603">
    <property type="entry name" value="tRNA-synt_1_2"/>
    <property type="match status" value="1"/>
</dbReference>
<dbReference type="Pfam" id="PF09334">
    <property type="entry name" value="tRNA-synt_1g"/>
    <property type="match status" value="1"/>
</dbReference>
<dbReference type="PRINTS" id="PR00985">
    <property type="entry name" value="TRNASYNTHLEU"/>
</dbReference>
<dbReference type="SUPFAM" id="SSF47323">
    <property type="entry name" value="Anticodon-binding domain of a subclass of class I aminoacyl-tRNA synthetases"/>
    <property type="match status" value="1"/>
</dbReference>
<dbReference type="SUPFAM" id="SSF52374">
    <property type="entry name" value="Nucleotidylyl transferase"/>
    <property type="match status" value="1"/>
</dbReference>
<dbReference type="SUPFAM" id="SSF50677">
    <property type="entry name" value="ValRS/IleRS/LeuRS editing domain"/>
    <property type="match status" value="1"/>
</dbReference>
<dbReference type="PROSITE" id="PS00178">
    <property type="entry name" value="AA_TRNA_LIGASE_I"/>
    <property type="match status" value="1"/>
</dbReference>